<evidence type="ECO:0000255" key="1"/>
<evidence type="ECO:0000269" key="2">
    <source>
    </source>
</evidence>
<evidence type="ECO:0000269" key="3">
    <source>
    </source>
</evidence>
<evidence type="ECO:0000269" key="4">
    <source>
    </source>
</evidence>
<evidence type="ECO:0000305" key="5"/>
<evidence type="ECO:0000305" key="6">
    <source>
    </source>
</evidence>
<proteinExistence type="evidence at protein level"/>
<gene>
    <name type="primary">COX16</name>
    <name type="ordered locus">YJL003W</name>
    <name type="ORF">J1403</name>
    <name type="ORF">YJR83.2</name>
</gene>
<sequence length="118" mass="14077">MSFSGKKFRSRRQQLVYEASLAGRYKKALSKHPFLFFGLPFCATIVLGSFWLSSFTAIKYEQGDRKVQEINEEDILKIRKNQREFDIKEEYYRLQGLSEEDWEPVRVARLKDESENVW</sequence>
<dbReference type="EMBL" id="X87611">
    <property type="protein sequence ID" value="CAA60919.1"/>
    <property type="molecule type" value="Genomic_DNA"/>
</dbReference>
<dbReference type="EMBL" id="Z49278">
    <property type="protein sequence ID" value="CAA89293.1"/>
    <property type="molecule type" value="Genomic_DNA"/>
</dbReference>
<dbReference type="EMBL" id="AY558241">
    <property type="protein sequence ID" value="AAS56567.1"/>
    <property type="molecule type" value="Genomic_DNA"/>
</dbReference>
<dbReference type="EMBL" id="BK006943">
    <property type="protein sequence ID" value="DAA08788.1"/>
    <property type="molecule type" value="Genomic_DNA"/>
</dbReference>
<dbReference type="PIR" id="S55185">
    <property type="entry name" value="S55185"/>
</dbReference>
<dbReference type="RefSeq" id="NP_012531.1">
    <property type="nucleotide sequence ID" value="NM_001181437.1"/>
</dbReference>
<dbReference type="BioGRID" id="33754">
    <property type="interactions" value="88"/>
</dbReference>
<dbReference type="FunCoup" id="P47081">
    <property type="interactions" value="178"/>
</dbReference>
<dbReference type="STRING" id="4932.YJL003W"/>
<dbReference type="PaxDb" id="4932-YJL003W"/>
<dbReference type="PeptideAtlas" id="P47081"/>
<dbReference type="EnsemblFungi" id="YJL003W_mRNA">
    <property type="protein sequence ID" value="YJL003W"/>
    <property type="gene ID" value="YJL003W"/>
</dbReference>
<dbReference type="GeneID" id="853454"/>
<dbReference type="KEGG" id="sce:YJL003W"/>
<dbReference type="AGR" id="SGD:S000003540"/>
<dbReference type="SGD" id="S000003540">
    <property type="gene designation" value="COX16"/>
</dbReference>
<dbReference type="VEuPathDB" id="FungiDB:YJL003W"/>
<dbReference type="eggNOG" id="ENOG502S9GT">
    <property type="taxonomic scope" value="Eukaryota"/>
</dbReference>
<dbReference type="GeneTree" id="ENSGT00940000175347"/>
<dbReference type="HOGENOM" id="CLU_131611_2_0_1"/>
<dbReference type="InParanoid" id="P47081"/>
<dbReference type="OMA" id="VNMKDEY"/>
<dbReference type="OrthoDB" id="5516033at2759"/>
<dbReference type="BioCyc" id="YEAST:G3O-31482-MONOMER"/>
<dbReference type="BioGRID-ORCS" id="853454">
    <property type="hits" value="0 hits in 10 CRISPR screens"/>
</dbReference>
<dbReference type="PRO" id="PR:P47081"/>
<dbReference type="Proteomes" id="UP000002311">
    <property type="component" value="Chromosome X"/>
</dbReference>
<dbReference type="RNAct" id="P47081">
    <property type="molecule type" value="protein"/>
</dbReference>
<dbReference type="GO" id="GO:0005743">
    <property type="term" value="C:mitochondrial inner membrane"/>
    <property type="evidence" value="ECO:0000314"/>
    <property type="project" value="SGD"/>
</dbReference>
<dbReference type="GO" id="GO:0005739">
    <property type="term" value="C:mitochondrion"/>
    <property type="evidence" value="ECO:0007005"/>
    <property type="project" value="SGD"/>
</dbReference>
<dbReference type="GO" id="GO:0033617">
    <property type="term" value="P:mitochondrial cytochrome c oxidase assembly"/>
    <property type="evidence" value="ECO:0000315"/>
    <property type="project" value="SGD"/>
</dbReference>
<dbReference type="InterPro" id="IPR020164">
    <property type="entry name" value="Cyt_c_Oxase_assmbl_COX16"/>
</dbReference>
<dbReference type="PANTHER" id="PTHR17130:SF14">
    <property type="entry name" value="CYTOCHROME C OXIDASE ASSEMBLY PROTEIN COX16 HOMOLOG, MITOCHONDRIAL"/>
    <property type="match status" value="1"/>
</dbReference>
<dbReference type="PANTHER" id="PTHR17130">
    <property type="entry name" value="MITOCHONDRIAL OUTER MEMBRANE PROTEIN 25"/>
    <property type="match status" value="1"/>
</dbReference>
<dbReference type="Pfam" id="PF14138">
    <property type="entry name" value="COX16"/>
    <property type="match status" value="1"/>
</dbReference>
<keyword id="KW-0472">Membrane</keyword>
<keyword id="KW-0496">Mitochondrion</keyword>
<keyword id="KW-0999">Mitochondrion inner membrane</keyword>
<keyword id="KW-1185">Reference proteome</keyword>
<keyword id="KW-0809">Transit peptide</keyword>
<keyword id="KW-0812">Transmembrane</keyword>
<keyword id="KW-1133">Transmembrane helix</keyword>
<comment type="function">
    <text evidence="2 4">Required for the assembly of the mitochondrial respiratory chain complex IV (CIV), also known as cytochrome c oxidase (PubMed:12446688, PubMed:28821616). May participate in merging the COX1 and COX2 assembly lines (PubMed:28821616).</text>
</comment>
<comment type="subcellular location">
    <subcellularLocation>
        <location evidence="6">Mitochondrion inner membrane</location>
        <topology evidence="5">Single-pass membrane protein</topology>
    </subcellularLocation>
</comment>
<comment type="miscellaneous">
    <text evidence="3">Present with 672 molecules/cell in log phase SD medium.</text>
</comment>
<comment type="similarity">
    <text evidence="5">Belongs to the COX16 family.</text>
</comment>
<accession>P47081</accession>
<accession>D6VWH2</accession>
<feature type="transit peptide" description="Mitochondrion" evidence="1">
    <location>
        <begin position="1"/>
        <end status="unknown"/>
    </location>
</feature>
<feature type="chain" id="PRO_0000203080" description="Cytochrome c oxidase assembly protein COX16, mitochondrial">
    <location>
        <begin status="unknown"/>
        <end position="118"/>
    </location>
</feature>
<feature type="transmembrane region" description="Helical" evidence="1">
    <location>
        <begin position="33"/>
        <end position="53"/>
    </location>
</feature>
<name>COX16_YEAST</name>
<organism>
    <name type="scientific">Saccharomyces cerevisiae (strain ATCC 204508 / S288c)</name>
    <name type="common">Baker's yeast</name>
    <dbReference type="NCBI Taxonomy" id="559292"/>
    <lineage>
        <taxon>Eukaryota</taxon>
        <taxon>Fungi</taxon>
        <taxon>Dikarya</taxon>
        <taxon>Ascomycota</taxon>
        <taxon>Saccharomycotina</taxon>
        <taxon>Saccharomycetes</taxon>
        <taxon>Saccharomycetales</taxon>
        <taxon>Saccharomycetaceae</taxon>
        <taxon>Saccharomyces</taxon>
    </lineage>
</organism>
<reference key="1">
    <citation type="journal article" date="1996" name="EMBO J.">
        <title>Complete nucleotide sequence of Saccharomyces cerevisiae chromosome X.</title>
        <authorList>
            <person name="Galibert F."/>
            <person name="Alexandraki D."/>
            <person name="Baur A."/>
            <person name="Boles E."/>
            <person name="Chalwatzis N."/>
            <person name="Chuat J.-C."/>
            <person name="Coster F."/>
            <person name="Cziepluch C."/>
            <person name="de Haan M."/>
            <person name="Domdey H."/>
            <person name="Durand P."/>
            <person name="Entian K.-D."/>
            <person name="Gatius M."/>
            <person name="Goffeau A."/>
            <person name="Grivell L.A."/>
            <person name="Hennemann A."/>
            <person name="Herbert C.J."/>
            <person name="Heumann K."/>
            <person name="Hilger F."/>
            <person name="Hollenberg C.P."/>
            <person name="Huang M.-E."/>
            <person name="Jacq C."/>
            <person name="Jauniaux J.-C."/>
            <person name="Katsoulou C."/>
            <person name="Kirchrath L."/>
            <person name="Kleine K."/>
            <person name="Kordes E."/>
            <person name="Koetter P."/>
            <person name="Liebl S."/>
            <person name="Louis E.J."/>
            <person name="Manus V."/>
            <person name="Mewes H.-W."/>
            <person name="Miosga T."/>
            <person name="Obermaier B."/>
            <person name="Perea J."/>
            <person name="Pohl T.M."/>
            <person name="Portetelle D."/>
            <person name="Pujol A."/>
            <person name="Purnelle B."/>
            <person name="Ramezani Rad M."/>
            <person name="Rasmussen S.W."/>
            <person name="Rose M."/>
            <person name="Rossau R."/>
            <person name="Schaaff-Gerstenschlaeger I."/>
            <person name="Smits P.H.M."/>
            <person name="Scarcez T."/>
            <person name="Soriano N."/>
            <person name="To Van D."/>
            <person name="Tzermia M."/>
            <person name="Van Broekhoven A."/>
            <person name="Vandenbol M."/>
            <person name="Wedler H."/>
            <person name="von Wettstein D."/>
            <person name="Wambutt R."/>
            <person name="Zagulski M."/>
            <person name="Zollner A."/>
            <person name="Karpfinger-Hartl L."/>
        </authorList>
    </citation>
    <scope>NUCLEOTIDE SEQUENCE [LARGE SCALE GENOMIC DNA]</scope>
    <source>
        <strain>ATCC 204508 / S288c</strain>
    </source>
</reference>
<reference key="2">
    <citation type="journal article" date="2014" name="G3 (Bethesda)">
        <title>The reference genome sequence of Saccharomyces cerevisiae: Then and now.</title>
        <authorList>
            <person name="Engel S.R."/>
            <person name="Dietrich F.S."/>
            <person name="Fisk D.G."/>
            <person name="Binkley G."/>
            <person name="Balakrishnan R."/>
            <person name="Costanzo M.C."/>
            <person name="Dwight S.S."/>
            <person name="Hitz B.C."/>
            <person name="Karra K."/>
            <person name="Nash R.S."/>
            <person name="Weng S."/>
            <person name="Wong E.D."/>
            <person name="Lloyd P."/>
            <person name="Skrzypek M.S."/>
            <person name="Miyasato S.R."/>
            <person name="Simison M."/>
            <person name="Cherry J.M."/>
        </authorList>
    </citation>
    <scope>GENOME REANNOTATION</scope>
    <source>
        <strain>ATCC 204508 / S288c</strain>
    </source>
</reference>
<reference key="3">
    <citation type="journal article" date="2007" name="Genome Res.">
        <title>Approaching a complete repository of sequence-verified protein-encoding clones for Saccharomyces cerevisiae.</title>
        <authorList>
            <person name="Hu Y."/>
            <person name="Rolfs A."/>
            <person name="Bhullar B."/>
            <person name="Murthy T.V.S."/>
            <person name="Zhu C."/>
            <person name="Berger M.F."/>
            <person name="Camargo A.A."/>
            <person name="Kelley F."/>
            <person name="McCarron S."/>
            <person name="Jepson D."/>
            <person name="Richardson A."/>
            <person name="Raphael J."/>
            <person name="Moreira D."/>
            <person name="Taycher E."/>
            <person name="Zuo D."/>
            <person name="Mohr S."/>
            <person name="Kane M.F."/>
            <person name="Williamson J."/>
            <person name="Simpson A.J.G."/>
            <person name="Bulyk M.L."/>
            <person name="Harlow E."/>
            <person name="Marsischky G."/>
            <person name="Kolodner R.D."/>
            <person name="LaBaer J."/>
        </authorList>
    </citation>
    <scope>NUCLEOTIDE SEQUENCE [GENOMIC DNA]</scope>
    <source>
        <strain>ATCC 204508 / S288c</strain>
    </source>
</reference>
<reference key="4">
    <citation type="journal article" date="2003" name="J. Biol. Chem.">
        <title>COX16 encodes a novel protein required for the assembly of cytochrome oxidase in Saccharomyces cerevisiae.</title>
        <authorList>
            <person name="Carlson C.G."/>
            <person name="Barrientos A."/>
            <person name="Tzagoloff A."/>
            <person name="Glerum D.M."/>
        </authorList>
    </citation>
    <scope>FUNCTION</scope>
    <scope>SUBCELLULAR LOCATION</scope>
</reference>
<reference key="5">
    <citation type="journal article" date="2003" name="Nature">
        <title>Global analysis of protein expression in yeast.</title>
        <authorList>
            <person name="Ghaemmaghami S."/>
            <person name="Huh W.-K."/>
            <person name="Bower K."/>
            <person name="Howson R.W."/>
            <person name="Belle A."/>
            <person name="Dephoure N."/>
            <person name="O'Shea E.K."/>
            <person name="Weissman J.S."/>
        </authorList>
    </citation>
    <scope>LEVEL OF PROTEIN EXPRESSION [LARGE SCALE ANALYSIS]</scope>
</reference>
<reference key="6">
    <citation type="journal article" date="2003" name="Proc. Natl. Acad. Sci. U.S.A.">
        <title>The proteome of Saccharomyces cerevisiae mitochondria.</title>
        <authorList>
            <person name="Sickmann A."/>
            <person name="Reinders J."/>
            <person name="Wagner Y."/>
            <person name="Joppich C."/>
            <person name="Zahedi R.P."/>
            <person name="Meyer H.E."/>
            <person name="Schoenfisch B."/>
            <person name="Perschil I."/>
            <person name="Chacinska A."/>
            <person name="Guiard B."/>
            <person name="Rehling P."/>
            <person name="Pfanner N."/>
            <person name="Meisinger C."/>
        </authorList>
    </citation>
    <scope>SUBCELLULAR LOCATION [LARGE SCALE ANALYSIS]</scope>
    <source>
        <strain>ATCC 76625 / YPH499</strain>
    </source>
</reference>
<reference key="7">
    <citation type="journal article" date="2017" name="J. Biol. Chem.">
        <title>Cox16 protein is physically associated with Cox1p assembly intermediates and with cytochrome oxidase.</title>
        <authorList>
            <person name="Su C.H."/>
            <person name="Tzagoloff A."/>
        </authorList>
    </citation>
    <scope>FUNCTION</scope>
</reference>
<protein>
    <recommendedName>
        <fullName>Cytochrome c oxidase assembly protein COX16, mitochondrial</fullName>
    </recommendedName>
</protein>